<evidence type="ECO:0000255" key="1">
    <source>
        <dbReference type="HAMAP-Rule" id="MF_00380"/>
    </source>
</evidence>
<evidence type="ECO:0000256" key="2">
    <source>
        <dbReference type="SAM" id="MobiDB-lite"/>
    </source>
</evidence>
<organism>
    <name type="scientific">Escherichia coli (strain UTI89 / UPEC)</name>
    <dbReference type="NCBI Taxonomy" id="364106"/>
    <lineage>
        <taxon>Bacteria</taxon>
        <taxon>Pseudomonadati</taxon>
        <taxon>Pseudomonadota</taxon>
        <taxon>Gammaproteobacteria</taxon>
        <taxon>Enterobacterales</taxon>
        <taxon>Enterobacteriaceae</taxon>
        <taxon>Escherichia</taxon>
    </lineage>
</organism>
<proteinExistence type="inferred from homology"/>
<reference key="1">
    <citation type="journal article" date="2006" name="Proc. Natl. Acad. Sci. U.S.A.">
        <title>Identification of genes subject to positive selection in uropathogenic strains of Escherichia coli: a comparative genomics approach.</title>
        <authorList>
            <person name="Chen S.L."/>
            <person name="Hung C.-S."/>
            <person name="Xu J."/>
            <person name="Reigstad C.S."/>
            <person name="Magrini V."/>
            <person name="Sabo A."/>
            <person name="Blasiar D."/>
            <person name="Bieri T."/>
            <person name="Meyer R.R."/>
            <person name="Ozersky P."/>
            <person name="Armstrong J.R."/>
            <person name="Fulton R.S."/>
            <person name="Latreille J.P."/>
            <person name="Spieth J."/>
            <person name="Hooton T.M."/>
            <person name="Mardis E.R."/>
            <person name="Hultgren S.J."/>
            <person name="Gordon J.I."/>
        </authorList>
    </citation>
    <scope>NUCLEOTIDE SEQUENCE [LARGE SCALE GENOMIC DNA]</scope>
    <source>
        <strain>UTI89 / UPEC</strain>
    </source>
</reference>
<protein>
    <recommendedName>
        <fullName evidence="1">Integration host factor subunit alpha</fullName>
        <shortName evidence="1">IHF-alpha</shortName>
    </recommendedName>
</protein>
<name>IHFA_ECOUT</name>
<keyword id="KW-0233">DNA recombination</keyword>
<keyword id="KW-0238">DNA-binding</keyword>
<keyword id="KW-0804">Transcription</keyword>
<keyword id="KW-0805">Transcription regulation</keyword>
<keyword id="KW-0810">Translation regulation</keyword>
<sequence>MALTKAEMSEYLFDKLGLSKRDAKELVELFFEEIRRALENGEQVKLSGFGNFDLRDKNQRPGRNPKTGEDIPITARRVVTFRPGQKLKSRVENASPKDE</sequence>
<comment type="function">
    <text evidence="1">This protein is one of the two subunits of integration host factor, a specific DNA-binding protein that functions in genetic recombination as well as in transcriptional and translational control.</text>
</comment>
<comment type="subunit">
    <text evidence="1">Heterodimer of an alpha and a beta chain.</text>
</comment>
<comment type="similarity">
    <text evidence="1">Belongs to the bacterial histone-like protein family.</text>
</comment>
<feature type="chain" id="PRO_0000277730" description="Integration host factor subunit alpha">
    <location>
        <begin position="1"/>
        <end position="99"/>
    </location>
</feature>
<feature type="region of interest" description="Disordered" evidence="2">
    <location>
        <begin position="49"/>
        <end position="73"/>
    </location>
</feature>
<gene>
    <name evidence="1" type="primary">ihfA</name>
    <name evidence="1" type="synonym">himA</name>
    <name type="ordered locus">UTI89_C1905</name>
</gene>
<dbReference type="EMBL" id="CP000243">
    <property type="protein sequence ID" value="ABE07381.1"/>
    <property type="molecule type" value="Genomic_DNA"/>
</dbReference>
<dbReference type="RefSeq" id="WP_001229265.1">
    <property type="nucleotide sequence ID" value="NZ_CP064825.1"/>
</dbReference>
<dbReference type="SMR" id="Q1RB83"/>
<dbReference type="GeneID" id="93775925"/>
<dbReference type="KEGG" id="eci:UTI89_C1905"/>
<dbReference type="HOGENOM" id="CLU_105066_1_3_6"/>
<dbReference type="Proteomes" id="UP000001952">
    <property type="component" value="Chromosome"/>
</dbReference>
<dbReference type="GO" id="GO:0005829">
    <property type="term" value="C:cytosol"/>
    <property type="evidence" value="ECO:0007669"/>
    <property type="project" value="TreeGrafter"/>
</dbReference>
<dbReference type="GO" id="GO:0003677">
    <property type="term" value="F:DNA binding"/>
    <property type="evidence" value="ECO:0007669"/>
    <property type="project" value="UniProtKB-UniRule"/>
</dbReference>
<dbReference type="GO" id="GO:0030527">
    <property type="term" value="F:structural constituent of chromatin"/>
    <property type="evidence" value="ECO:0007669"/>
    <property type="project" value="InterPro"/>
</dbReference>
<dbReference type="GO" id="GO:0006310">
    <property type="term" value="P:DNA recombination"/>
    <property type="evidence" value="ECO:0007669"/>
    <property type="project" value="UniProtKB-UniRule"/>
</dbReference>
<dbReference type="GO" id="GO:0009893">
    <property type="term" value="P:positive regulation of metabolic process"/>
    <property type="evidence" value="ECO:0007669"/>
    <property type="project" value="UniProtKB-ARBA"/>
</dbReference>
<dbReference type="GO" id="GO:0006355">
    <property type="term" value="P:regulation of DNA-templated transcription"/>
    <property type="evidence" value="ECO:0007669"/>
    <property type="project" value="UniProtKB-UniRule"/>
</dbReference>
<dbReference type="GO" id="GO:0006417">
    <property type="term" value="P:regulation of translation"/>
    <property type="evidence" value="ECO:0007669"/>
    <property type="project" value="UniProtKB-UniRule"/>
</dbReference>
<dbReference type="CDD" id="cd13835">
    <property type="entry name" value="IHF_A"/>
    <property type="match status" value="1"/>
</dbReference>
<dbReference type="FunFam" id="4.10.520.10:FF:000002">
    <property type="entry name" value="Integration host factor subunit alpha"/>
    <property type="match status" value="1"/>
</dbReference>
<dbReference type="Gene3D" id="4.10.520.10">
    <property type="entry name" value="IHF-like DNA-binding proteins"/>
    <property type="match status" value="1"/>
</dbReference>
<dbReference type="HAMAP" id="MF_00380">
    <property type="entry name" value="IHF_alpha"/>
    <property type="match status" value="1"/>
</dbReference>
<dbReference type="InterPro" id="IPR000119">
    <property type="entry name" value="Hist_DNA-bd"/>
</dbReference>
<dbReference type="InterPro" id="IPR020816">
    <property type="entry name" value="Histone-like_DNA-bd_CS"/>
</dbReference>
<dbReference type="InterPro" id="IPR010992">
    <property type="entry name" value="IHF-like_DNA-bd_dom_sf"/>
</dbReference>
<dbReference type="InterPro" id="IPR005684">
    <property type="entry name" value="IHF_alpha"/>
</dbReference>
<dbReference type="NCBIfam" id="TIGR00987">
    <property type="entry name" value="himA"/>
    <property type="match status" value="1"/>
</dbReference>
<dbReference type="NCBIfam" id="NF001401">
    <property type="entry name" value="PRK00285.1"/>
    <property type="match status" value="1"/>
</dbReference>
<dbReference type="PANTHER" id="PTHR33175">
    <property type="entry name" value="DNA-BINDING PROTEIN HU"/>
    <property type="match status" value="1"/>
</dbReference>
<dbReference type="PANTHER" id="PTHR33175:SF2">
    <property type="entry name" value="INTEGRATION HOST FACTOR SUBUNIT ALPHA"/>
    <property type="match status" value="1"/>
</dbReference>
<dbReference type="Pfam" id="PF00216">
    <property type="entry name" value="Bac_DNA_binding"/>
    <property type="match status" value="1"/>
</dbReference>
<dbReference type="PRINTS" id="PR01727">
    <property type="entry name" value="DNABINDINGHU"/>
</dbReference>
<dbReference type="SMART" id="SM00411">
    <property type="entry name" value="BHL"/>
    <property type="match status" value="1"/>
</dbReference>
<dbReference type="SUPFAM" id="SSF47729">
    <property type="entry name" value="IHF-like DNA-binding proteins"/>
    <property type="match status" value="1"/>
</dbReference>
<dbReference type="PROSITE" id="PS00045">
    <property type="entry name" value="HISTONE_LIKE"/>
    <property type="match status" value="1"/>
</dbReference>
<accession>Q1RB83</accession>